<organism>
    <name type="scientific">Mycobacterium bovis (strain ATCC BAA-935 / AF2122/97)</name>
    <dbReference type="NCBI Taxonomy" id="233413"/>
    <lineage>
        <taxon>Bacteria</taxon>
        <taxon>Bacillati</taxon>
        <taxon>Actinomycetota</taxon>
        <taxon>Actinomycetes</taxon>
        <taxon>Mycobacteriales</taxon>
        <taxon>Mycobacteriaceae</taxon>
        <taxon>Mycobacterium</taxon>
        <taxon>Mycobacterium tuberculosis complex</taxon>
    </lineage>
</organism>
<feature type="chain" id="PRO_0000195202" description="Uncharacterized protein Mb0047c">
    <location>
        <begin position="1"/>
        <end position="367"/>
    </location>
</feature>
<dbReference type="EMBL" id="LT708304">
    <property type="protein sequence ID" value="SIT98407.1"/>
    <property type="molecule type" value="Genomic_DNA"/>
</dbReference>
<dbReference type="RefSeq" id="NP_853716.1">
    <property type="nucleotide sequence ID" value="NC_002945.3"/>
</dbReference>
<dbReference type="RefSeq" id="WP_003400492.1">
    <property type="nucleotide sequence ID" value="NC_002945.4"/>
</dbReference>
<dbReference type="SMR" id="P59967"/>
<dbReference type="KEGG" id="mbo:BQ2027_MB0047C"/>
<dbReference type="PATRIC" id="fig|233413.5.peg.53"/>
<dbReference type="Proteomes" id="UP000001419">
    <property type="component" value="Chromosome"/>
</dbReference>
<dbReference type="GO" id="GO:0004512">
    <property type="term" value="F:inositol-3-phosphate synthase activity"/>
    <property type="evidence" value="ECO:0007669"/>
    <property type="project" value="InterPro"/>
</dbReference>
<dbReference type="GO" id="GO:0006021">
    <property type="term" value="P:inositol biosynthetic process"/>
    <property type="evidence" value="ECO:0007669"/>
    <property type="project" value="InterPro"/>
</dbReference>
<dbReference type="GO" id="GO:0008654">
    <property type="term" value="P:phospholipid biosynthetic process"/>
    <property type="evidence" value="ECO:0007669"/>
    <property type="project" value="InterPro"/>
</dbReference>
<dbReference type="Gene3D" id="3.30.360.10">
    <property type="entry name" value="Dihydrodipicolinate Reductase, domain 2"/>
    <property type="match status" value="1"/>
</dbReference>
<dbReference type="Gene3D" id="3.40.50.720">
    <property type="entry name" value="NAD(P)-binding Rossmann-like Domain"/>
    <property type="match status" value="1"/>
</dbReference>
<dbReference type="InterPro" id="IPR052199">
    <property type="entry name" value="MIPS"/>
</dbReference>
<dbReference type="InterPro" id="IPR002587">
    <property type="entry name" value="Myo-inos-1-P_Synthase"/>
</dbReference>
<dbReference type="InterPro" id="IPR017815">
    <property type="entry name" value="Myo-inos-1-P_Synthase_actino"/>
</dbReference>
<dbReference type="InterPro" id="IPR013021">
    <property type="entry name" value="Myo-inos-1-P_Synthase_GAPDH"/>
</dbReference>
<dbReference type="InterPro" id="IPR036291">
    <property type="entry name" value="NAD(P)-bd_dom_sf"/>
</dbReference>
<dbReference type="NCBIfam" id="TIGR03450">
    <property type="entry name" value="mycothiol_INO1"/>
    <property type="match status" value="1"/>
</dbReference>
<dbReference type="PANTHER" id="PTHR43125">
    <property type="entry name" value="INOSITOL-3-PHOSPHATE SYNTHASE"/>
    <property type="match status" value="1"/>
</dbReference>
<dbReference type="PANTHER" id="PTHR43125:SF1">
    <property type="entry name" value="INOSITOL-3-PHOSPHATE SYNTHASE"/>
    <property type="match status" value="1"/>
</dbReference>
<dbReference type="Pfam" id="PF01658">
    <property type="entry name" value="Inos-1-P_synth"/>
    <property type="match status" value="1"/>
</dbReference>
<dbReference type="PIRSF" id="PIRSF015578">
    <property type="entry name" value="Myoinos-ppht_syn"/>
    <property type="match status" value="1"/>
</dbReference>
<dbReference type="SUPFAM" id="SSF55347">
    <property type="entry name" value="Glyceraldehyde-3-phosphate dehydrogenase-like, C-terminal domain"/>
    <property type="match status" value="1"/>
</dbReference>
<dbReference type="SUPFAM" id="SSF51735">
    <property type="entry name" value="NAD(P)-binding Rossmann-fold domains"/>
    <property type="match status" value="1"/>
</dbReference>
<sequence length="367" mass="39994">MSEHQSLPAPEASTEVRVAIVGVGNCASSLVQGVEYYYNADDTSTVPGLMHVRFGPYHVRDVKFVAAFDVDAKKVGFDLSDAIFASENNTIKIADVAPTNVIVQRGPTLDGIGKYYADTIELSDAEPVDVVQALKEAKVDVLVSYLPVGSEEADKFYAQCAIDAGVAFVNALPVFIASDPVWAKKFTDAGVPIVGDDIKSQVGATITHRVLAKLFEDRGVQLDRTMQLNVGGNMDFLNMLERERLESKKISKTQAVTSNLKREFKTKDVHIGPSDHVGWLDDRKWAYVRLEGRAFGDVPLNLEYKLEVWDSPNSAGVIIDAVRAAKIAKDRGIGGPVIPASAYLMKSPPEQLPDDIARAQLEEFIIG</sequence>
<comment type="similarity">
    <text evidence="1">Belongs to the myo-inositol 1-phosphate synthase family.</text>
</comment>
<protein>
    <recommendedName>
        <fullName>Uncharacterized protein Mb0047c</fullName>
    </recommendedName>
</protein>
<reference key="1">
    <citation type="journal article" date="2003" name="Proc. Natl. Acad. Sci. U.S.A.">
        <title>The complete genome sequence of Mycobacterium bovis.</title>
        <authorList>
            <person name="Garnier T."/>
            <person name="Eiglmeier K."/>
            <person name="Camus J.-C."/>
            <person name="Medina N."/>
            <person name="Mansoor H."/>
            <person name="Pryor M."/>
            <person name="Duthoy S."/>
            <person name="Grondin S."/>
            <person name="Lacroix C."/>
            <person name="Monsempe C."/>
            <person name="Simon S."/>
            <person name="Harris B."/>
            <person name="Atkin R."/>
            <person name="Doggett J."/>
            <person name="Mayes R."/>
            <person name="Keating L."/>
            <person name="Wheeler P.R."/>
            <person name="Parkhill J."/>
            <person name="Barrell B.G."/>
            <person name="Cole S.T."/>
            <person name="Gordon S.V."/>
            <person name="Hewinson R.G."/>
        </authorList>
    </citation>
    <scope>NUCLEOTIDE SEQUENCE [LARGE SCALE GENOMIC DNA]</scope>
    <source>
        <strain>ATCC BAA-935 / AF2122/97</strain>
    </source>
</reference>
<reference key="2">
    <citation type="journal article" date="2017" name="Genome Announc.">
        <title>Updated reference genome sequence and annotation of Mycobacterium bovis AF2122/97.</title>
        <authorList>
            <person name="Malone K.M."/>
            <person name="Farrell D."/>
            <person name="Stuber T.P."/>
            <person name="Schubert O.T."/>
            <person name="Aebersold R."/>
            <person name="Robbe-Austerman S."/>
            <person name="Gordon S.V."/>
        </authorList>
    </citation>
    <scope>NUCLEOTIDE SEQUENCE [LARGE SCALE GENOMIC DNA]</scope>
    <scope>GENOME REANNOTATION</scope>
    <source>
        <strain>ATCC BAA-935 / AF2122/97</strain>
    </source>
</reference>
<gene>
    <name type="ordered locus">BQ2027_MB0047C</name>
</gene>
<keyword id="KW-1185">Reference proteome</keyword>
<proteinExistence type="inferred from homology"/>
<evidence type="ECO:0000305" key="1"/>
<name>Y047_MYCBO</name>
<accession>P59967</accession>
<accession>A0A1R3XU53</accession>
<accession>X2BDV5</accession>